<reference key="1">
    <citation type="submission" date="2005-06" db="EMBL/GenBank/DDBJ databases">
        <title>DNA sequences of macaque genes expressed in brain or testis and its evolutionary implications.</title>
        <authorList>
            <consortium name="International consortium for macaque cDNA sequencing and analysis"/>
        </authorList>
    </citation>
    <scope>NUCLEOTIDE SEQUENCE [LARGE SCALE MRNA]</scope>
    <source>
        <tissue>Brain cortex</tissue>
    </source>
</reference>
<keyword id="KW-0963">Cytoplasm</keyword>
<keyword id="KW-0597">Phosphoprotein</keyword>
<keyword id="KW-1185">Reference proteome</keyword>
<accession>Q4R541</accession>
<gene>
    <name type="primary">NREP</name>
    <name type="ORF">QccE-20026</name>
</gene>
<evidence type="ECO:0000250" key="1"/>
<evidence type="ECO:0000256" key="2">
    <source>
        <dbReference type="SAM" id="MobiDB-lite"/>
    </source>
</evidence>
<proteinExistence type="inferred from homology"/>
<dbReference type="EMBL" id="AB169703">
    <property type="protein sequence ID" value="BAE01784.1"/>
    <property type="molecule type" value="mRNA"/>
</dbReference>
<dbReference type="RefSeq" id="XP_005557559.1">
    <property type="nucleotide sequence ID" value="XM_005557502.2"/>
</dbReference>
<dbReference type="RefSeq" id="XP_005557561.1">
    <property type="nucleotide sequence ID" value="XM_005557504.2"/>
</dbReference>
<dbReference type="RefSeq" id="XP_005557562.1">
    <property type="nucleotide sequence ID" value="XM_005557505.1"/>
</dbReference>
<dbReference type="RefSeq" id="XP_005557563.1">
    <property type="nucleotide sequence ID" value="XM_005557506.2"/>
</dbReference>
<dbReference type="STRING" id="9541.ENSMFAP00000012300"/>
<dbReference type="Ensembl" id="ENSMFAT00000074118.1">
    <property type="protein sequence ID" value="ENSMFAP00000051701.1"/>
    <property type="gene ID" value="ENSMFAG00000062127.1"/>
</dbReference>
<dbReference type="VEuPathDB" id="HostDB:ENSMFAG00000022681"/>
<dbReference type="eggNOG" id="ENOG502SFKT">
    <property type="taxonomic scope" value="Eukaryota"/>
</dbReference>
<dbReference type="GeneTree" id="ENSGT00390000016521"/>
<dbReference type="OMA" id="PRSTIWV"/>
<dbReference type="Proteomes" id="UP000233100">
    <property type="component" value="Chromosome 6"/>
</dbReference>
<dbReference type="GO" id="GO:0005737">
    <property type="term" value="C:cytoplasm"/>
    <property type="evidence" value="ECO:0007669"/>
    <property type="project" value="UniProtKB-SubCell"/>
</dbReference>
<dbReference type="GO" id="GO:0031103">
    <property type="term" value="P:axon regeneration"/>
    <property type="evidence" value="ECO:0007669"/>
    <property type="project" value="TreeGrafter"/>
</dbReference>
<dbReference type="GO" id="GO:0045664">
    <property type="term" value="P:regulation of neuron differentiation"/>
    <property type="evidence" value="ECO:0007669"/>
    <property type="project" value="TreeGrafter"/>
</dbReference>
<dbReference type="GO" id="GO:0017015">
    <property type="term" value="P:regulation of transforming growth factor beta receptor signaling pathway"/>
    <property type="evidence" value="ECO:0007669"/>
    <property type="project" value="TreeGrafter"/>
</dbReference>
<dbReference type="InterPro" id="IPR024417">
    <property type="entry name" value="Neuronal_3.1"/>
</dbReference>
<dbReference type="PANTHER" id="PTHR17102">
    <property type="entry name" value="NEURONAL REGENERATION-RELATED PROTEIN"/>
    <property type="match status" value="1"/>
</dbReference>
<dbReference type="PANTHER" id="PTHR17102:SF4">
    <property type="entry name" value="NEURONAL REGENERATION-RELATED PROTEIN"/>
    <property type="match status" value="1"/>
</dbReference>
<dbReference type="Pfam" id="PF11092">
    <property type="entry name" value="Alveol-reg_P311"/>
    <property type="match status" value="1"/>
</dbReference>
<feature type="chain" id="PRO_0000253595" description="Neuronal regeneration-related protein">
    <location>
        <begin position="1"/>
        <end position="68"/>
    </location>
</feature>
<feature type="region of interest" description="Disordered" evidence="2">
    <location>
        <begin position="21"/>
        <end position="54"/>
    </location>
</feature>
<feature type="compositionally biased region" description="Polar residues" evidence="2">
    <location>
        <begin position="44"/>
        <end position="54"/>
    </location>
</feature>
<organism>
    <name type="scientific">Macaca fascicularis</name>
    <name type="common">Crab-eating macaque</name>
    <name type="synonym">Cynomolgus monkey</name>
    <dbReference type="NCBI Taxonomy" id="9541"/>
    <lineage>
        <taxon>Eukaryota</taxon>
        <taxon>Metazoa</taxon>
        <taxon>Chordata</taxon>
        <taxon>Craniata</taxon>
        <taxon>Vertebrata</taxon>
        <taxon>Euteleostomi</taxon>
        <taxon>Mammalia</taxon>
        <taxon>Eutheria</taxon>
        <taxon>Euarchontoglires</taxon>
        <taxon>Primates</taxon>
        <taxon>Haplorrhini</taxon>
        <taxon>Catarrhini</taxon>
        <taxon>Cercopithecidae</taxon>
        <taxon>Cercopithecinae</taxon>
        <taxon>Macaca</taxon>
    </lineage>
</organism>
<comment type="function">
    <text evidence="1">May have roles in neural function and cellular differentiation. Ectopic expression promotes axonal regeneration, induces differentiation of fibroblast into myofibroblast, induces myofibroblast ameboid migration, augments motility of gliomas, and increases retinoic-acid regulation of lipid-droplet biogenesis. Down-regulates the expression of TGFB1 and TGFB2 but not of TGFB3. May play a role in the regulation of alveolar generation.</text>
</comment>
<comment type="subunit">
    <text evidence="1">Interacts with the latency-associated peptides (LAP) of TGFB1 and TGFB2; the interaction results in a decrease in TGFB autoinduction. Interacts with FLNA.</text>
</comment>
<comment type="subcellular location">
    <subcellularLocation>
        <location evidence="1">Cytoplasm</location>
    </subcellularLocation>
</comment>
<comment type="PTM">
    <text evidence="1">Phosphorylated on Ser-59. Phosphorylation decreases stability and activity.</text>
</comment>
<sequence length="68" mass="7951">MVYYPERFVWVSQEPFPNKNMEGRLPKGRLPVPKEVNRKKNDETNAASLTPLGSSELRSPRISYLHFF</sequence>
<protein>
    <recommendedName>
        <fullName>Neuronal regeneration-related protein</fullName>
    </recommendedName>
    <alternativeName>
        <fullName>Neuronal protein 3.1</fullName>
    </alternativeName>
    <alternativeName>
        <fullName>Protein p311</fullName>
    </alternativeName>
</protein>
<name>NREP_MACFA</name>